<name>ORN_MYCBP</name>
<comment type="function">
    <text evidence="1">3'-to-5' exoribonuclease specific for small oligoribonucleotides.</text>
</comment>
<comment type="subcellular location">
    <subcellularLocation>
        <location evidence="1">Cytoplasm</location>
    </subcellularLocation>
</comment>
<comment type="similarity">
    <text evidence="1">Belongs to the oligoribonuclease family.</text>
</comment>
<gene>
    <name evidence="1" type="primary">orn</name>
    <name type="ordered locus">BCG_2531</name>
</gene>
<sequence>MQDELVWIDCEMTGLDLGSDKLIEIAALVTDADLNILGDGVDVVMHADDAALSGMIDVVAEMHSRSGLIDEVKASTVDLATAEAMVLDYINEHVKQPKTAPLAGNSIATDRAFIARDMPTLDSFLHYRMIDVSSIKELCRRWYPRIYFGQPPKGLTHRALADIHESIRELRFYRRTAFVPQPGPSTSEIAAVVAELSDGAGAQEETDSAEAPQSG</sequence>
<evidence type="ECO:0000255" key="1">
    <source>
        <dbReference type="HAMAP-Rule" id="MF_00045"/>
    </source>
</evidence>
<evidence type="ECO:0000256" key="2">
    <source>
        <dbReference type="SAM" id="MobiDB-lite"/>
    </source>
</evidence>
<reference key="1">
    <citation type="journal article" date="2007" name="Proc. Natl. Acad. Sci. U.S.A.">
        <title>Genome plasticity of BCG and impact on vaccine efficacy.</title>
        <authorList>
            <person name="Brosch R."/>
            <person name="Gordon S.V."/>
            <person name="Garnier T."/>
            <person name="Eiglmeier K."/>
            <person name="Frigui W."/>
            <person name="Valenti P."/>
            <person name="Dos Santos S."/>
            <person name="Duthoy S."/>
            <person name="Lacroix C."/>
            <person name="Garcia-Pelayo C."/>
            <person name="Inwald J.K."/>
            <person name="Golby P."/>
            <person name="Garcia J.N."/>
            <person name="Hewinson R.G."/>
            <person name="Behr M.A."/>
            <person name="Quail M.A."/>
            <person name="Churcher C."/>
            <person name="Barrell B.G."/>
            <person name="Parkhill J."/>
            <person name="Cole S.T."/>
        </authorList>
    </citation>
    <scope>NUCLEOTIDE SEQUENCE [LARGE SCALE GENOMIC DNA]</scope>
    <source>
        <strain>BCG / Pasteur 1173P2</strain>
    </source>
</reference>
<keyword id="KW-0963">Cytoplasm</keyword>
<keyword id="KW-0269">Exonuclease</keyword>
<keyword id="KW-0378">Hydrolase</keyword>
<keyword id="KW-0540">Nuclease</keyword>
<feature type="chain" id="PRO_1000004261" description="Oligoribonuclease">
    <location>
        <begin position="1"/>
        <end position="215"/>
    </location>
</feature>
<feature type="domain" description="Exonuclease" evidence="1">
    <location>
        <begin position="5"/>
        <end position="170"/>
    </location>
</feature>
<feature type="region of interest" description="Disordered" evidence="2">
    <location>
        <begin position="196"/>
        <end position="215"/>
    </location>
</feature>
<feature type="active site" evidence="1">
    <location>
        <position position="127"/>
    </location>
</feature>
<dbReference type="EC" id="3.1.15.-" evidence="1"/>
<dbReference type="EMBL" id="AM408590">
    <property type="protein sequence ID" value="CAL72519.1"/>
    <property type="molecule type" value="Genomic_DNA"/>
</dbReference>
<dbReference type="RefSeq" id="WP_003899361.1">
    <property type="nucleotide sequence ID" value="NC_008769.1"/>
</dbReference>
<dbReference type="SMR" id="A1KLK6"/>
<dbReference type="GeneID" id="45426505"/>
<dbReference type="KEGG" id="mbb:BCG_2531"/>
<dbReference type="HOGENOM" id="CLU_064761_3_0_11"/>
<dbReference type="Proteomes" id="UP000001472">
    <property type="component" value="Chromosome"/>
</dbReference>
<dbReference type="GO" id="GO:0005737">
    <property type="term" value="C:cytoplasm"/>
    <property type="evidence" value="ECO:0007669"/>
    <property type="project" value="UniProtKB-SubCell"/>
</dbReference>
<dbReference type="GO" id="GO:0000175">
    <property type="term" value="F:3'-5'-RNA exonuclease activity"/>
    <property type="evidence" value="ECO:0007669"/>
    <property type="project" value="InterPro"/>
</dbReference>
<dbReference type="GO" id="GO:0003676">
    <property type="term" value="F:nucleic acid binding"/>
    <property type="evidence" value="ECO:0007669"/>
    <property type="project" value="InterPro"/>
</dbReference>
<dbReference type="CDD" id="cd06135">
    <property type="entry name" value="Orn"/>
    <property type="match status" value="1"/>
</dbReference>
<dbReference type="FunFam" id="3.30.420.10:FF:000003">
    <property type="entry name" value="Oligoribonuclease"/>
    <property type="match status" value="1"/>
</dbReference>
<dbReference type="Gene3D" id="3.30.420.10">
    <property type="entry name" value="Ribonuclease H-like superfamily/Ribonuclease H"/>
    <property type="match status" value="1"/>
</dbReference>
<dbReference type="HAMAP" id="MF_00045">
    <property type="entry name" value="Oligoribonuclease"/>
    <property type="match status" value="1"/>
</dbReference>
<dbReference type="InterPro" id="IPR013520">
    <property type="entry name" value="Exonuclease_RNaseT/DNA_pol3"/>
</dbReference>
<dbReference type="InterPro" id="IPR022894">
    <property type="entry name" value="Oligoribonuclease"/>
</dbReference>
<dbReference type="InterPro" id="IPR012337">
    <property type="entry name" value="RNaseH-like_sf"/>
</dbReference>
<dbReference type="InterPro" id="IPR036397">
    <property type="entry name" value="RNaseH_sf"/>
</dbReference>
<dbReference type="NCBIfam" id="NF003765">
    <property type="entry name" value="PRK05359.1"/>
    <property type="match status" value="1"/>
</dbReference>
<dbReference type="PANTHER" id="PTHR11046">
    <property type="entry name" value="OLIGORIBONUCLEASE, MITOCHONDRIAL"/>
    <property type="match status" value="1"/>
</dbReference>
<dbReference type="PANTHER" id="PTHR11046:SF0">
    <property type="entry name" value="OLIGORIBONUCLEASE, MITOCHONDRIAL"/>
    <property type="match status" value="1"/>
</dbReference>
<dbReference type="Pfam" id="PF00929">
    <property type="entry name" value="RNase_T"/>
    <property type="match status" value="1"/>
</dbReference>
<dbReference type="SMART" id="SM00479">
    <property type="entry name" value="EXOIII"/>
    <property type="match status" value="1"/>
</dbReference>
<dbReference type="SUPFAM" id="SSF53098">
    <property type="entry name" value="Ribonuclease H-like"/>
    <property type="match status" value="1"/>
</dbReference>
<accession>A1KLK6</accession>
<protein>
    <recommendedName>
        <fullName evidence="1">Oligoribonuclease</fullName>
        <ecNumber evidence="1">3.1.15.-</ecNumber>
    </recommendedName>
</protein>
<organism>
    <name type="scientific">Mycobacterium bovis (strain BCG / Pasteur 1173P2)</name>
    <dbReference type="NCBI Taxonomy" id="410289"/>
    <lineage>
        <taxon>Bacteria</taxon>
        <taxon>Bacillati</taxon>
        <taxon>Actinomycetota</taxon>
        <taxon>Actinomycetes</taxon>
        <taxon>Mycobacteriales</taxon>
        <taxon>Mycobacteriaceae</taxon>
        <taxon>Mycobacterium</taxon>
        <taxon>Mycobacterium tuberculosis complex</taxon>
    </lineage>
</organism>
<proteinExistence type="inferred from homology"/>